<sequence>MKALTSNVSKALPIGATLQCVDNTGAREIQIISVKGFKGVRRRLDVAGVGDLVVASVKKGTADMRREVVNAVVIRQKKEYMRADGLRVKFEDNAAVIITPEGILKGSEVRGPVAKEAADRWPSVGSAASILV</sequence>
<evidence type="ECO:0000255" key="1">
    <source>
        <dbReference type="HAMAP-Rule" id="MF_01367"/>
    </source>
</evidence>
<evidence type="ECO:0000305" key="2"/>
<reference key="1">
    <citation type="journal article" date="2007" name="Proc. Natl. Acad. Sci. U.S.A.">
        <title>Genomic and metabolic adaptations of Methanobrevibacter smithii to the human gut.</title>
        <authorList>
            <person name="Samuel B.S."/>
            <person name="Hansen E.E."/>
            <person name="Manchester J.K."/>
            <person name="Coutinho P.M."/>
            <person name="Henrissat B."/>
            <person name="Fulton R."/>
            <person name="Latreille P."/>
            <person name="Kim K."/>
            <person name="Wilson R.K."/>
            <person name="Gordon J.I."/>
        </authorList>
    </citation>
    <scope>NUCLEOTIDE SEQUENCE [LARGE SCALE GENOMIC DNA]</scope>
    <source>
        <strain>ATCC 35061 / DSM 861 / OCM 144 / PS</strain>
    </source>
</reference>
<gene>
    <name evidence="1" type="primary">rpl14</name>
    <name type="ordered locus">Msm_0751</name>
</gene>
<accession>A5UL78</accession>
<dbReference type="EMBL" id="CP000678">
    <property type="protein sequence ID" value="ABQ86956.1"/>
    <property type="molecule type" value="Genomic_DNA"/>
</dbReference>
<dbReference type="RefSeq" id="WP_004033220.1">
    <property type="nucleotide sequence ID" value="NZ_CP117965.1"/>
</dbReference>
<dbReference type="SMR" id="A5UL78"/>
<dbReference type="STRING" id="420247.Msm_0751"/>
<dbReference type="EnsemblBacteria" id="ABQ86956">
    <property type="protein sequence ID" value="ABQ86956"/>
    <property type="gene ID" value="Msm_0751"/>
</dbReference>
<dbReference type="KEGG" id="msi:Msm_0751"/>
<dbReference type="PATRIC" id="fig|420247.28.peg.748"/>
<dbReference type="eggNOG" id="arCOG04095">
    <property type="taxonomic scope" value="Archaea"/>
</dbReference>
<dbReference type="HOGENOM" id="CLU_095071_3_0_2"/>
<dbReference type="Proteomes" id="UP000001992">
    <property type="component" value="Chromosome"/>
</dbReference>
<dbReference type="GO" id="GO:0022625">
    <property type="term" value="C:cytosolic large ribosomal subunit"/>
    <property type="evidence" value="ECO:0007669"/>
    <property type="project" value="TreeGrafter"/>
</dbReference>
<dbReference type="GO" id="GO:0070180">
    <property type="term" value="F:large ribosomal subunit rRNA binding"/>
    <property type="evidence" value="ECO:0007669"/>
    <property type="project" value="TreeGrafter"/>
</dbReference>
<dbReference type="GO" id="GO:0003735">
    <property type="term" value="F:structural constituent of ribosome"/>
    <property type="evidence" value="ECO:0007669"/>
    <property type="project" value="InterPro"/>
</dbReference>
<dbReference type="GO" id="GO:0006412">
    <property type="term" value="P:translation"/>
    <property type="evidence" value="ECO:0007669"/>
    <property type="project" value="UniProtKB-UniRule"/>
</dbReference>
<dbReference type="CDD" id="cd00337">
    <property type="entry name" value="Ribosomal_uL14"/>
    <property type="match status" value="1"/>
</dbReference>
<dbReference type="FunFam" id="2.40.150.20:FF:000007">
    <property type="entry name" value="50S ribosomal protein L14"/>
    <property type="match status" value="1"/>
</dbReference>
<dbReference type="Gene3D" id="2.40.150.20">
    <property type="entry name" value="Ribosomal protein L14"/>
    <property type="match status" value="1"/>
</dbReference>
<dbReference type="HAMAP" id="MF_01367">
    <property type="entry name" value="Ribosomal_uL14"/>
    <property type="match status" value="1"/>
</dbReference>
<dbReference type="InterPro" id="IPR000218">
    <property type="entry name" value="Ribosomal_uL14"/>
</dbReference>
<dbReference type="InterPro" id="IPR019971">
    <property type="entry name" value="Ribosomal_uL14_arc"/>
</dbReference>
<dbReference type="InterPro" id="IPR019972">
    <property type="entry name" value="Ribosomal_uL14_CS"/>
</dbReference>
<dbReference type="InterPro" id="IPR036853">
    <property type="entry name" value="Ribosomal_uL14_sf"/>
</dbReference>
<dbReference type="NCBIfam" id="NF006344">
    <property type="entry name" value="PRK08571.1"/>
    <property type="match status" value="1"/>
</dbReference>
<dbReference type="NCBIfam" id="TIGR03673">
    <property type="entry name" value="uL14_arch"/>
    <property type="match status" value="1"/>
</dbReference>
<dbReference type="PANTHER" id="PTHR11761">
    <property type="entry name" value="50S/60S RIBOSOMAL PROTEIN L14/L23"/>
    <property type="match status" value="1"/>
</dbReference>
<dbReference type="PANTHER" id="PTHR11761:SF8">
    <property type="entry name" value="LARGE RIBOSOMAL SUBUNIT PROTEIN UL14"/>
    <property type="match status" value="1"/>
</dbReference>
<dbReference type="Pfam" id="PF00238">
    <property type="entry name" value="Ribosomal_L14"/>
    <property type="match status" value="1"/>
</dbReference>
<dbReference type="SMART" id="SM01374">
    <property type="entry name" value="Ribosomal_L14"/>
    <property type="match status" value="1"/>
</dbReference>
<dbReference type="SUPFAM" id="SSF50193">
    <property type="entry name" value="Ribosomal protein L14"/>
    <property type="match status" value="1"/>
</dbReference>
<dbReference type="PROSITE" id="PS00049">
    <property type="entry name" value="RIBOSOMAL_L14"/>
    <property type="match status" value="1"/>
</dbReference>
<proteinExistence type="inferred from homology"/>
<feature type="chain" id="PRO_1000055633" description="Large ribosomal subunit protein uL14">
    <location>
        <begin position="1"/>
        <end position="132"/>
    </location>
</feature>
<keyword id="KW-0687">Ribonucleoprotein</keyword>
<keyword id="KW-0689">Ribosomal protein</keyword>
<keyword id="KW-0694">RNA-binding</keyword>
<keyword id="KW-0699">rRNA-binding</keyword>
<protein>
    <recommendedName>
        <fullName evidence="1">Large ribosomal subunit protein uL14</fullName>
    </recommendedName>
    <alternativeName>
        <fullName evidence="2">50S ribosomal protein L14</fullName>
    </alternativeName>
</protein>
<organism>
    <name type="scientific">Methanobrevibacter smithii (strain ATCC 35061 / DSM 861 / OCM 144 / PS)</name>
    <dbReference type="NCBI Taxonomy" id="420247"/>
    <lineage>
        <taxon>Archaea</taxon>
        <taxon>Methanobacteriati</taxon>
        <taxon>Methanobacteriota</taxon>
        <taxon>Methanomada group</taxon>
        <taxon>Methanobacteria</taxon>
        <taxon>Methanobacteriales</taxon>
        <taxon>Methanobacteriaceae</taxon>
        <taxon>Methanobrevibacter</taxon>
    </lineage>
</organism>
<comment type="function">
    <text evidence="1">Binds to 23S rRNA. Forms part of two intersubunit bridges in the 70S ribosome.</text>
</comment>
<comment type="subunit">
    <text evidence="1">Part of the 50S ribosomal subunit. Forms a cluster with proteins L3 and L24e, part of which may contact the 16S rRNA in 2 intersubunit bridges.</text>
</comment>
<comment type="similarity">
    <text evidence="1">Belongs to the universal ribosomal protein uL14 family.</text>
</comment>
<name>RL14_METS3</name>